<organismHost>
    <name type="scientific">Aves</name>
    <dbReference type="NCBI Taxonomy" id="8782"/>
</organismHost>
<organismHost>
    <name type="scientific">Homo sapiens</name>
    <name type="common">Human</name>
    <dbReference type="NCBI Taxonomy" id="9606"/>
</organismHost>
<organismHost>
    <name type="scientific">Sus scrofa</name>
    <name type="common">Pig</name>
    <dbReference type="NCBI Taxonomy" id="9823"/>
</organismHost>
<gene>
    <name evidence="2" type="primary">PA</name>
</gene>
<reference key="1">
    <citation type="submission" date="2007-03" db="EMBL/GenBank/DDBJ databases">
        <title>The NIAID influenza genome sequencing project.</title>
        <authorList>
            <person name="Ghedin E."/>
            <person name="Spiro D."/>
            <person name="Miller N."/>
            <person name="Zaborsky J."/>
            <person name="Feldblyum T."/>
            <person name="Subbu V."/>
            <person name="Shumway M."/>
            <person name="Sparenborg J."/>
            <person name="Groveman L."/>
            <person name="Halpin R."/>
            <person name="Sitz J."/>
            <person name="Koo H."/>
            <person name="Salzberg S.L."/>
            <person name="Webster R.G."/>
            <person name="Hoffmann E."/>
            <person name="Krauss S."/>
            <person name="Naeve C."/>
            <person name="Bao Y."/>
            <person name="Bolotov P."/>
            <person name="Dernovoy D."/>
            <person name="Kiryutin B."/>
            <person name="Lipman D.J."/>
            <person name="Tatusova T."/>
        </authorList>
    </citation>
    <scope>NUCLEOTIDE SEQUENCE [GENOMIC RNA]</scope>
</reference>
<reference key="2">
    <citation type="submission" date="2007-03" db="EMBL/GenBank/DDBJ databases">
        <authorList>
            <consortium name="The NIAID Influenza Genome Sequencing Consortium"/>
        </authorList>
    </citation>
    <scope>NUCLEOTIDE SEQUENCE [GENOMIC RNA]</scope>
</reference>
<accession>A4GCL5</accession>
<organism>
    <name type="scientific">Influenza A virus (strain A/USA:Iowa/1943 H1N1)</name>
    <dbReference type="NCBI Taxonomy" id="425563"/>
    <lineage>
        <taxon>Viruses</taxon>
        <taxon>Riboviria</taxon>
        <taxon>Orthornavirae</taxon>
        <taxon>Negarnaviricota</taxon>
        <taxon>Polyploviricotina</taxon>
        <taxon>Insthoviricetes</taxon>
        <taxon>Articulavirales</taxon>
        <taxon>Orthomyxoviridae</taxon>
        <taxon>Alphainfluenzavirus</taxon>
        <taxon>Alphainfluenzavirus influenzae</taxon>
        <taxon>Influenza A virus</taxon>
    </lineage>
</organism>
<keyword id="KW-1157">Cap snatching</keyword>
<keyword id="KW-0255">Endonuclease</keyword>
<keyword id="KW-1262">Eukaryotic host gene expression shutoff by virus</keyword>
<keyword id="KW-1191">Eukaryotic host transcription shutoff by virus</keyword>
<keyword id="KW-1035">Host cytoplasm</keyword>
<keyword id="KW-1190">Host gene expression shutoff by virus</keyword>
<keyword id="KW-1048">Host nucleus</keyword>
<keyword id="KW-0945">Host-virus interaction</keyword>
<keyword id="KW-0378">Hydrolase</keyword>
<keyword id="KW-1104">Inhibition of host RNA polymerase II by virus</keyword>
<keyword id="KW-0464">Manganese</keyword>
<keyword id="KW-0479">Metal-binding</keyword>
<keyword id="KW-0540">Nuclease</keyword>
<keyword id="KW-0597">Phosphoprotein</keyword>
<keyword id="KW-0688">Ribosomal frameshifting</keyword>
<evidence type="ECO:0000250" key="1">
    <source>
        <dbReference type="UniProtKB" id="P03433"/>
    </source>
</evidence>
<evidence type="ECO:0000255" key="2">
    <source>
        <dbReference type="HAMAP-Rule" id="MF_04063"/>
    </source>
</evidence>
<sequence length="716" mass="82613">MEDFVRQCFNPMIVELAEKAMKEYGEDLKIETNKFAAICTHLEVCFMYSDFHFINEQGESIIVELGDPNALLKHRFEIIEGRDRTMAWTVVNSICNTTGAEKPKFLPDLYDYKENRFIEIGVTRREVHIYYLEKANKIKSEKTHIHIFSFTGEEMATKADYTLDEESRARIKTRLFTIRQEMASRGLWDSFRQSERGEETIEERFEITGTMRKLADQSLPPNFSCLENFRAYVDGFEPNGYIEGKLSQMSKEVNARIEPFLKTTPRPLRLPDGPPCSQRSKFLLMDALKLSIEDPSHEGEGIPLYDAIKCMRTFFGWKEPNIVKPHEKGINPNYLLSWKQLLAELQDIENEGKIPKTKNMKKTSQLKWALGENMAPEKVDFDDCKDVSDLKQYDSDEPELRSLSSWIQNEFNKACELTDSIWIELDEIGEDVAPIEHIASMRRNYFTAEVSHCRATEYIMKGVYINTALLNASCAAMDDFQLIPMISKCRTKEGRRKTNLYGFIIKGRSHLRNDTDVVNFVSMEFSLTDPRLEPHKWEKYCVLEIGDMLLRSALGQVSRPMFLYVRTNGTSKIKMKWGMEMRRCLLQSLQQIESMIEAESSVKEKDMTKEFFENKSETWPIGESPKGVEEGSIGKVCRTLLAKSVFNSLYASPQLEGFSAESRKLLLIVQALRDNLEPGTFDLGGLYEAVEECLINDPWVLLNASWFNSFLTHALR</sequence>
<proteinExistence type="inferred from homology"/>
<comment type="function">
    <text evidence="2">Plays an essential role in viral RNA transcription and replication by forming the heterotrimeric polymerase complex together with PB1 and PB2 subunits. The complex transcribes viral mRNAs by using a unique mechanism called cap-snatching. It consists in the hijacking and cleavage of host capped pre-mRNAs. These short capped RNAs are then used as primers for viral mRNAs. The PB2 subunit is responsible for the binding of the 5' cap of cellular pre-mRNAs which are subsequently cleaved after 10-13 nucleotides by the PA subunit that carries the endonuclease activity.</text>
</comment>
<comment type="cofactor">
    <cofactor evidence="2">
        <name>Mn(2+)</name>
        <dbReference type="ChEBI" id="CHEBI:29035"/>
    </cofactor>
    <text evidence="2">Binds 2 manganese ions per subunit.</text>
</comment>
<comment type="subunit">
    <text evidence="1 2">Influenza RNA polymerase is composed of three subunits: PB1, PB2 and PA. Interacts (via C-terminus) with PB1 (via N-terminus).</text>
</comment>
<comment type="subcellular location">
    <subcellularLocation>
        <location evidence="2">Host cytoplasm</location>
    </subcellularLocation>
    <subcellularLocation>
        <location evidence="2">Host nucleus</location>
    </subcellularLocation>
    <text evidence="1 2">PB1 and PA are transported in the host nucleus as a complex.</text>
</comment>
<comment type="alternative products">
    <event type="ribosomal frameshifting"/>
    <isoform>
        <id>A4GCL5-1</id>
        <name>PA</name>
        <sequence type="displayed"/>
    </isoform>
    <isoform>
        <id>P0DJW3-1</id>
        <name>PA-X</name>
        <sequence type="external"/>
    </isoform>
</comment>
<comment type="PTM">
    <text evidence="1 2">Phosphorylated on serines and threonines by host kinases, including human casein kinase II.</text>
</comment>
<comment type="similarity">
    <text evidence="2">Belongs to the influenza viruses PA family.</text>
</comment>
<feature type="chain" id="PRO_0000372999" description="Polymerase acidic protein">
    <location>
        <begin position="1"/>
        <end position="716"/>
    </location>
</feature>
<feature type="short sequence motif" description="Nuclear localization signal 1 (NLS1)" evidence="1 2">
    <location>
        <begin position="124"/>
        <end position="139"/>
    </location>
</feature>
<feature type="short sequence motif" description="Nuclear localization signal 2 (NLS2)" evidence="1 2">
    <location>
        <begin position="184"/>
        <end position="247"/>
    </location>
</feature>
<feature type="binding site" evidence="2">
    <location>
        <position position="41"/>
    </location>
    <ligand>
        <name>Mn(2+)</name>
        <dbReference type="ChEBI" id="CHEBI:29035"/>
        <label>1</label>
    </ligand>
</feature>
<feature type="binding site" evidence="2">
    <location>
        <position position="80"/>
    </location>
    <ligand>
        <name>Mn(2+)</name>
        <dbReference type="ChEBI" id="CHEBI:29035"/>
        <label>2</label>
    </ligand>
</feature>
<feature type="binding site" evidence="2">
    <location>
        <position position="108"/>
    </location>
    <ligand>
        <name>Mn(2+)</name>
        <dbReference type="ChEBI" id="CHEBI:29035"/>
        <label>1</label>
    </ligand>
</feature>
<feature type="binding site" evidence="2">
    <location>
        <position position="108"/>
    </location>
    <ligand>
        <name>Mn(2+)</name>
        <dbReference type="ChEBI" id="CHEBI:29035"/>
        <label>2</label>
    </ligand>
</feature>
<feature type="binding site" evidence="2">
    <location>
        <position position="119"/>
    </location>
    <ligand>
        <name>Mn(2+)</name>
        <dbReference type="ChEBI" id="CHEBI:29035"/>
        <label>1</label>
    </ligand>
</feature>
<feature type="binding site" evidence="2">
    <location>
        <position position="120"/>
    </location>
    <ligand>
        <name>Mn(2+)</name>
        <dbReference type="ChEBI" id="CHEBI:29035"/>
        <label>1</label>
    </ligand>
</feature>
<name>PA_I43A0</name>
<protein>
    <recommendedName>
        <fullName evidence="2">Polymerase acidic protein</fullName>
        <ecNumber evidence="2">3.1.-.-</ecNumber>
    </recommendedName>
    <alternativeName>
        <fullName evidence="2">RNA-directed RNA polymerase subunit P2</fullName>
    </alternativeName>
</protein>
<dbReference type="EC" id="3.1.-.-" evidence="2"/>
<dbReference type="EMBL" id="CY020466">
    <property type="protein sequence ID" value="ABO38380.1"/>
    <property type="molecule type" value="Viral_cRNA"/>
</dbReference>
<dbReference type="SMR" id="A4GCL5"/>
<dbReference type="MEROPS" id="S62.001"/>
<dbReference type="Proteomes" id="UP000008432">
    <property type="component" value="Genome"/>
</dbReference>
<dbReference type="GO" id="GO:0030430">
    <property type="term" value="C:host cell cytoplasm"/>
    <property type="evidence" value="ECO:0007669"/>
    <property type="project" value="UniProtKB-SubCell"/>
</dbReference>
<dbReference type="GO" id="GO:0042025">
    <property type="term" value="C:host cell nucleus"/>
    <property type="evidence" value="ECO:0007669"/>
    <property type="project" value="UniProtKB-SubCell"/>
</dbReference>
<dbReference type="GO" id="GO:0004519">
    <property type="term" value="F:endonuclease activity"/>
    <property type="evidence" value="ECO:0007669"/>
    <property type="project" value="UniProtKB-KW"/>
</dbReference>
<dbReference type="GO" id="GO:0046872">
    <property type="term" value="F:metal ion binding"/>
    <property type="evidence" value="ECO:0007669"/>
    <property type="project" value="UniProtKB-KW"/>
</dbReference>
<dbReference type="GO" id="GO:0003723">
    <property type="term" value="F:RNA binding"/>
    <property type="evidence" value="ECO:0007669"/>
    <property type="project" value="UniProtKB-UniRule"/>
</dbReference>
<dbReference type="GO" id="GO:0075526">
    <property type="term" value="P:cap snatching"/>
    <property type="evidence" value="ECO:0007669"/>
    <property type="project" value="UniProtKB-UniRule"/>
</dbReference>
<dbReference type="GO" id="GO:0006351">
    <property type="term" value="P:DNA-templated transcription"/>
    <property type="evidence" value="ECO:0007669"/>
    <property type="project" value="UniProtKB-UniRule"/>
</dbReference>
<dbReference type="GO" id="GO:0039657">
    <property type="term" value="P:symbiont-mediated suppression of host gene expression"/>
    <property type="evidence" value="ECO:0007669"/>
    <property type="project" value="UniProtKB-KW"/>
</dbReference>
<dbReference type="GO" id="GO:0039523">
    <property type="term" value="P:symbiont-mediated suppression of host mRNA transcription via inhibition of RNA polymerase II activity"/>
    <property type="evidence" value="ECO:0007669"/>
    <property type="project" value="UniProtKB-UniRule"/>
</dbReference>
<dbReference type="GO" id="GO:0039694">
    <property type="term" value="P:viral RNA genome replication"/>
    <property type="evidence" value="ECO:0007669"/>
    <property type="project" value="InterPro"/>
</dbReference>
<dbReference type="GO" id="GO:0075523">
    <property type="term" value="P:viral translational frameshifting"/>
    <property type="evidence" value="ECO:0007669"/>
    <property type="project" value="UniProtKB-KW"/>
</dbReference>
<dbReference type="FunFam" id="3.40.91.90:FF:000001">
    <property type="entry name" value="Polymerase acidic protein"/>
    <property type="match status" value="1"/>
</dbReference>
<dbReference type="Gene3D" id="3.40.91.90">
    <property type="entry name" value="Influenza RNA-dependent RNA polymerase subunit PA, endonuclease domain"/>
    <property type="match status" value="1"/>
</dbReference>
<dbReference type="HAMAP" id="MF_04063">
    <property type="entry name" value="INFV_PA"/>
    <property type="match status" value="1"/>
</dbReference>
<dbReference type="InterPro" id="IPR037534">
    <property type="entry name" value="INFV_PA"/>
</dbReference>
<dbReference type="InterPro" id="IPR001009">
    <property type="entry name" value="PA/PA-X"/>
</dbReference>
<dbReference type="InterPro" id="IPR038372">
    <property type="entry name" value="PA/PA-X_sf"/>
</dbReference>
<dbReference type="Pfam" id="PF00603">
    <property type="entry name" value="Flu_PA"/>
    <property type="match status" value="1"/>
</dbReference>